<organism>
    <name type="scientific">Pongo abelii</name>
    <name type="common">Sumatran orangutan</name>
    <name type="synonym">Pongo pygmaeus abelii</name>
    <dbReference type="NCBI Taxonomy" id="9601"/>
    <lineage>
        <taxon>Eukaryota</taxon>
        <taxon>Metazoa</taxon>
        <taxon>Chordata</taxon>
        <taxon>Craniata</taxon>
        <taxon>Vertebrata</taxon>
        <taxon>Euteleostomi</taxon>
        <taxon>Mammalia</taxon>
        <taxon>Eutheria</taxon>
        <taxon>Euarchontoglires</taxon>
        <taxon>Primates</taxon>
        <taxon>Haplorrhini</taxon>
        <taxon>Catarrhini</taxon>
        <taxon>Hominidae</taxon>
        <taxon>Pongo</taxon>
    </lineage>
</organism>
<protein>
    <recommendedName>
        <fullName evidence="4">ATP-dependent (S)-NAD(P)H-hydrate dehydratase</fullName>
        <ecNumber evidence="2 4">4.2.1.93</ecNumber>
    </recommendedName>
    <alternativeName>
        <fullName evidence="4">ATP-dependent NAD(P)HX dehydratase</fullName>
    </alternativeName>
    <alternativeName>
        <fullName evidence="4">Carbohydrate kinase domain-containing protein</fullName>
    </alternativeName>
    <alternativeName>
        <fullName evidence="1">NAD(P)HX dehydratase</fullName>
    </alternativeName>
</protein>
<proteinExistence type="evidence at transcript level"/>
<comment type="function">
    <text evidence="4">Catalyzes the dehydration of the S-form of NAD(P)HX at the expense of ATP, which is converted to ADP. Together with NAD(P)HX epimerase, which catalyzes the epimerization of the S- and R-forms, the enzyme allows the repair of both epimers of NAD(P)HX, a damaged form of NAD(P)H that is a result of enzymatic or heat-dependent hydration.</text>
</comment>
<comment type="catalytic activity">
    <reaction evidence="2 4">
        <text>(6S)-NADHX + ATP = ADP + phosphate + NADH + H(+)</text>
        <dbReference type="Rhea" id="RHEA:19017"/>
        <dbReference type="ChEBI" id="CHEBI:15378"/>
        <dbReference type="ChEBI" id="CHEBI:30616"/>
        <dbReference type="ChEBI" id="CHEBI:43474"/>
        <dbReference type="ChEBI" id="CHEBI:57945"/>
        <dbReference type="ChEBI" id="CHEBI:64074"/>
        <dbReference type="ChEBI" id="CHEBI:456216"/>
        <dbReference type="EC" id="4.2.1.93"/>
    </reaction>
</comment>
<comment type="catalytic activity">
    <reaction evidence="2">
        <text>(6S)-NADPHX + ATP = ADP + phosphate + NADPH + H(+)</text>
        <dbReference type="Rhea" id="RHEA:32231"/>
        <dbReference type="ChEBI" id="CHEBI:15378"/>
        <dbReference type="ChEBI" id="CHEBI:30616"/>
        <dbReference type="ChEBI" id="CHEBI:43474"/>
        <dbReference type="ChEBI" id="CHEBI:57783"/>
        <dbReference type="ChEBI" id="CHEBI:64076"/>
        <dbReference type="ChEBI" id="CHEBI:456216"/>
        <dbReference type="EC" id="4.2.1.93"/>
    </reaction>
</comment>
<comment type="cofactor">
    <cofactor evidence="4">
        <name>Mg(2+)</name>
        <dbReference type="ChEBI" id="CHEBI:18420"/>
    </cofactor>
</comment>
<comment type="subcellular location">
    <subcellularLocation>
        <location evidence="4">Mitochondrion</location>
    </subcellularLocation>
</comment>
<comment type="miscellaneous">
    <text evidence="4">This protein may be expected to contain an N-terminal transit peptide but none has been predicted.</text>
</comment>
<comment type="similarity">
    <text evidence="4">Belongs to the NnrD/CARKD family.</text>
</comment>
<reference key="1">
    <citation type="submission" date="2004-11" db="EMBL/GenBank/DDBJ databases">
        <authorList>
            <consortium name="The German cDNA consortium"/>
        </authorList>
    </citation>
    <scope>NUCLEOTIDE SEQUENCE [LARGE SCALE MRNA]</scope>
    <source>
        <tissue>Kidney</tissue>
    </source>
</reference>
<feature type="chain" id="PRO_0000337023" description="ATP-dependent (S)-NAD(P)H-hydrate dehydratase">
    <location>
        <begin position="1"/>
        <end position="329"/>
    </location>
</feature>
<feature type="domain" description="YjeF C-terminal" evidence="4">
    <location>
        <begin position="35"/>
        <end position="326"/>
    </location>
</feature>
<feature type="binding site" evidence="4">
    <location>
        <position position="135"/>
    </location>
    <ligand>
        <name>(6S)-NADPHX</name>
        <dbReference type="ChEBI" id="CHEBI:64076"/>
    </ligand>
</feature>
<feature type="binding site" evidence="4">
    <location>
        <begin position="188"/>
        <end position="194"/>
    </location>
    <ligand>
        <name>(6S)-NADPHX</name>
        <dbReference type="ChEBI" id="CHEBI:64076"/>
    </ligand>
</feature>
<feature type="binding site" evidence="4">
    <location>
        <begin position="228"/>
        <end position="232"/>
    </location>
    <ligand>
        <name>ATP</name>
        <dbReference type="ChEBI" id="CHEBI:30616"/>
    </ligand>
</feature>
<feature type="binding site" evidence="4">
    <location>
        <begin position="247"/>
        <end position="256"/>
    </location>
    <ligand>
        <name>ATP</name>
        <dbReference type="ChEBI" id="CHEBI:30616"/>
    </ligand>
</feature>
<feature type="binding site" evidence="4">
    <location>
        <position position="257"/>
    </location>
    <ligand>
        <name>(6S)-NADPHX</name>
        <dbReference type="ChEBI" id="CHEBI:64076"/>
    </ligand>
</feature>
<feature type="modified residue" description="Phosphotyrosine" evidence="2">
    <location>
        <position position="67"/>
    </location>
</feature>
<feature type="glycosylation site" description="N-linked (GlcNAc...) asparagine" evidence="3">
    <location>
        <position position="207"/>
    </location>
</feature>
<feature type="glycosylation site" description="N-linked (GlcNAc...) asparagine" evidence="3">
    <location>
        <position position="222"/>
    </location>
</feature>
<feature type="glycosylation site" description="N-linked (GlcNAc...) asparagine" evidence="3">
    <location>
        <position position="279"/>
    </location>
</feature>
<dbReference type="EC" id="4.2.1.93" evidence="2 4"/>
<dbReference type="EMBL" id="CR859931">
    <property type="protein sequence ID" value="CAH92086.1"/>
    <property type="molecule type" value="mRNA"/>
</dbReference>
<dbReference type="RefSeq" id="NP_001126217.1">
    <property type="nucleotide sequence ID" value="NM_001132745.1"/>
</dbReference>
<dbReference type="SMR" id="Q5R824"/>
<dbReference type="FunCoup" id="Q5R824">
    <property type="interactions" value="346"/>
</dbReference>
<dbReference type="STRING" id="9601.ENSPPYP00000006272"/>
<dbReference type="GlyCosmos" id="Q5R824">
    <property type="glycosylation" value="3 sites, No reported glycans"/>
</dbReference>
<dbReference type="GeneID" id="100173186"/>
<dbReference type="KEGG" id="pon:100173186"/>
<dbReference type="CTD" id="55739"/>
<dbReference type="eggNOG" id="KOG3974">
    <property type="taxonomic scope" value="Eukaryota"/>
</dbReference>
<dbReference type="InParanoid" id="Q5R824"/>
<dbReference type="OrthoDB" id="8110916at2759"/>
<dbReference type="Proteomes" id="UP000001595">
    <property type="component" value="Unplaced"/>
</dbReference>
<dbReference type="GO" id="GO:0005739">
    <property type="term" value="C:mitochondrion"/>
    <property type="evidence" value="ECO:0007669"/>
    <property type="project" value="UniProtKB-SubCell"/>
</dbReference>
<dbReference type="GO" id="GO:0005524">
    <property type="term" value="F:ATP binding"/>
    <property type="evidence" value="ECO:0007669"/>
    <property type="project" value="UniProtKB-KW"/>
</dbReference>
<dbReference type="GO" id="GO:0047453">
    <property type="term" value="F:ATP-dependent NAD(P)H-hydrate dehydratase activity"/>
    <property type="evidence" value="ECO:0007669"/>
    <property type="project" value="UniProtKB-UniRule"/>
</dbReference>
<dbReference type="GO" id="GO:0110051">
    <property type="term" value="P:metabolite repair"/>
    <property type="evidence" value="ECO:0007669"/>
    <property type="project" value="TreeGrafter"/>
</dbReference>
<dbReference type="GO" id="GO:0046496">
    <property type="term" value="P:nicotinamide nucleotide metabolic process"/>
    <property type="evidence" value="ECO:0007669"/>
    <property type="project" value="UniProtKB-UniRule"/>
</dbReference>
<dbReference type="CDD" id="cd01171">
    <property type="entry name" value="YXKO-related"/>
    <property type="match status" value="1"/>
</dbReference>
<dbReference type="FunFam" id="3.40.1190.20:FF:000013">
    <property type="entry name" value="ATP-dependent (S)-NAD(P)H-hydrate dehydratase"/>
    <property type="match status" value="1"/>
</dbReference>
<dbReference type="Gene3D" id="3.40.1190.20">
    <property type="match status" value="1"/>
</dbReference>
<dbReference type="HAMAP" id="MF_01965">
    <property type="entry name" value="NADHX_dehydratase"/>
    <property type="match status" value="1"/>
</dbReference>
<dbReference type="InterPro" id="IPR000631">
    <property type="entry name" value="CARKD"/>
</dbReference>
<dbReference type="InterPro" id="IPR029056">
    <property type="entry name" value="Ribokinase-like"/>
</dbReference>
<dbReference type="NCBIfam" id="TIGR00196">
    <property type="entry name" value="yjeF_cterm"/>
    <property type="match status" value="1"/>
</dbReference>
<dbReference type="PANTHER" id="PTHR12592:SF0">
    <property type="entry name" value="ATP-DEPENDENT (S)-NAD(P)H-HYDRATE DEHYDRATASE"/>
    <property type="match status" value="1"/>
</dbReference>
<dbReference type="PANTHER" id="PTHR12592">
    <property type="entry name" value="ATP-DEPENDENT (S)-NAD(P)H-HYDRATE DEHYDRATASE FAMILY MEMBER"/>
    <property type="match status" value="1"/>
</dbReference>
<dbReference type="Pfam" id="PF01256">
    <property type="entry name" value="Carb_kinase"/>
    <property type="match status" value="1"/>
</dbReference>
<dbReference type="SUPFAM" id="SSF53613">
    <property type="entry name" value="Ribokinase-like"/>
    <property type="match status" value="1"/>
</dbReference>
<dbReference type="PROSITE" id="PS51383">
    <property type="entry name" value="YJEF_C_3"/>
    <property type="match status" value="1"/>
</dbReference>
<name>NNRD_PONAB</name>
<gene>
    <name evidence="1" type="primary">NAXD</name>
    <name evidence="4" type="synonym">CARKD</name>
</gene>
<sequence length="329" mass="35099">MALGPRYGAIRACGRVLERAFSLRKAHSIKDMENTLQLVRNIIPPLSSTKHKGQDGRIGVVGGCQEYTGAPYFAAISALKVGADLSHVFCASAAAPVIKAYSPELIVHPVLDSRSAVHEAEKWLPRLHALVVGPGLGRDDALLRNVQGILEASKARDIPVVIDADGLWLVAQQPALIQGYRKAVLTPNHMEFSRLYDAVLRGPMDSNDSHGSVLRLSQALGNVTVVQKGERDILSNGQQVLVCSQEGSSRRCGGQGDLLSGSLGVLVHWALLAGPEKTNGSSPLLVAAFGACSLTRQCNHQAFQKHGRSTTTSDMIAEVGAAFSKLFET</sequence>
<accession>Q5R824</accession>
<keyword id="KW-0067">ATP-binding</keyword>
<keyword id="KW-0325">Glycoprotein</keyword>
<keyword id="KW-0456">Lyase</keyword>
<keyword id="KW-0496">Mitochondrion</keyword>
<keyword id="KW-0520">NAD</keyword>
<keyword id="KW-0521">NADP</keyword>
<keyword id="KW-0547">Nucleotide-binding</keyword>
<keyword id="KW-0597">Phosphoprotein</keyword>
<keyword id="KW-1185">Reference proteome</keyword>
<evidence type="ECO:0000250" key="1">
    <source>
        <dbReference type="UniProtKB" id="Q8IW45"/>
    </source>
</evidence>
<evidence type="ECO:0000250" key="2">
    <source>
        <dbReference type="UniProtKB" id="Q9CZ42"/>
    </source>
</evidence>
<evidence type="ECO:0000255" key="3"/>
<evidence type="ECO:0000255" key="4">
    <source>
        <dbReference type="HAMAP-Rule" id="MF_03157"/>
    </source>
</evidence>